<name>HSP70_DROME</name>
<gene>
    <name type="primary">Hsp70Aa</name>
    <name type="synonym">Hsp70A</name>
    <name type="ORF">CG31366</name>
</gene>
<keyword id="KW-0067">ATP-binding</keyword>
<keyword id="KW-0547">Nucleotide-binding</keyword>
<keyword id="KW-1185">Reference proteome</keyword>
<keyword id="KW-0346">Stress response</keyword>
<accession>P82910</accession>
<accession>Q5BI85</accession>
<accession>Q8MT04</accession>
<accession>Q95NG7</accession>
<accession>Q9BIS5</accession>
<reference key="1">
    <citation type="journal article" date="2002" name="J. Mol. Evol.">
        <title>Rapid concerted evolution via gene conversion at the Drosophila hsp70 genes.</title>
        <authorList>
            <person name="Bettencourt B.R."/>
            <person name="Feder M.E."/>
        </authorList>
    </citation>
    <scope>NUCLEOTIDE SEQUENCE [GENOMIC DNA]</scope>
    <source>
        <strain>122</strain>
        <strain>3CPA126</strain>
        <strain>3CPA2</strain>
        <strain>3CPA35</strain>
        <strain>3CPA43</strain>
        <strain>3CPA47</strain>
        <strain>3CPA61</strain>
        <strain>3CPA81</strain>
        <strain>3CPA86</strain>
        <strain>AUS</strain>
        <strain>B28</strain>
        <strain>FrV3-1</strain>
        <strain>QD18</strain>
        <strain>Z(H)1</strain>
    </source>
</reference>
<reference key="2">
    <citation type="journal article" date="2000" name="Science">
        <title>The genome sequence of Drosophila melanogaster.</title>
        <authorList>
            <person name="Adams M.D."/>
            <person name="Celniker S.E."/>
            <person name="Holt R.A."/>
            <person name="Evans C.A."/>
            <person name="Gocayne J.D."/>
            <person name="Amanatides P.G."/>
            <person name="Scherer S.E."/>
            <person name="Li P.W."/>
            <person name="Hoskins R.A."/>
            <person name="Galle R.F."/>
            <person name="George R.A."/>
            <person name="Lewis S.E."/>
            <person name="Richards S."/>
            <person name="Ashburner M."/>
            <person name="Henderson S.N."/>
            <person name="Sutton G.G."/>
            <person name="Wortman J.R."/>
            <person name="Yandell M.D."/>
            <person name="Zhang Q."/>
            <person name="Chen L.X."/>
            <person name="Brandon R.C."/>
            <person name="Rogers Y.-H.C."/>
            <person name="Blazej R.G."/>
            <person name="Champe M."/>
            <person name="Pfeiffer B.D."/>
            <person name="Wan K.H."/>
            <person name="Doyle C."/>
            <person name="Baxter E.G."/>
            <person name="Helt G."/>
            <person name="Nelson C.R."/>
            <person name="Miklos G.L.G."/>
            <person name="Abril J.F."/>
            <person name="Agbayani A."/>
            <person name="An H.-J."/>
            <person name="Andrews-Pfannkoch C."/>
            <person name="Baldwin D."/>
            <person name="Ballew R.M."/>
            <person name="Basu A."/>
            <person name="Baxendale J."/>
            <person name="Bayraktaroglu L."/>
            <person name="Beasley E.M."/>
            <person name="Beeson K.Y."/>
            <person name="Benos P.V."/>
            <person name="Berman B.P."/>
            <person name="Bhandari D."/>
            <person name="Bolshakov S."/>
            <person name="Borkova D."/>
            <person name="Botchan M.R."/>
            <person name="Bouck J."/>
            <person name="Brokstein P."/>
            <person name="Brottier P."/>
            <person name="Burtis K.C."/>
            <person name="Busam D.A."/>
            <person name="Butler H."/>
            <person name="Cadieu E."/>
            <person name="Center A."/>
            <person name="Chandra I."/>
            <person name="Cherry J.M."/>
            <person name="Cawley S."/>
            <person name="Dahlke C."/>
            <person name="Davenport L.B."/>
            <person name="Davies P."/>
            <person name="de Pablos B."/>
            <person name="Delcher A."/>
            <person name="Deng Z."/>
            <person name="Mays A.D."/>
            <person name="Dew I."/>
            <person name="Dietz S.M."/>
            <person name="Dodson K."/>
            <person name="Doup L.E."/>
            <person name="Downes M."/>
            <person name="Dugan-Rocha S."/>
            <person name="Dunkov B.C."/>
            <person name="Dunn P."/>
            <person name="Durbin K.J."/>
            <person name="Evangelista C.C."/>
            <person name="Ferraz C."/>
            <person name="Ferriera S."/>
            <person name="Fleischmann W."/>
            <person name="Fosler C."/>
            <person name="Gabrielian A.E."/>
            <person name="Garg N.S."/>
            <person name="Gelbart W.M."/>
            <person name="Glasser K."/>
            <person name="Glodek A."/>
            <person name="Gong F."/>
            <person name="Gorrell J.H."/>
            <person name="Gu Z."/>
            <person name="Guan P."/>
            <person name="Harris M."/>
            <person name="Harris N.L."/>
            <person name="Harvey D.A."/>
            <person name="Heiman T.J."/>
            <person name="Hernandez J.R."/>
            <person name="Houck J."/>
            <person name="Hostin D."/>
            <person name="Houston K.A."/>
            <person name="Howland T.J."/>
            <person name="Wei M.-H."/>
            <person name="Ibegwam C."/>
            <person name="Jalali M."/>
            <person name="Kalush F."/>
            <person name="Karpen G.H."/>
            <person name="Ke Z."/>
            <person name="Kennison J.A."/>
            <person name="Ketchum K.A."/>
            <person name="Kimmel B.E."/>
            <person name="Kodira C.D."/>
            <person name="Kraft C.L."/>
            <person name="Kravitz S."/>
            <person name="Kulp D."/>
            <person name="Lai Z."/>
            <person name="Lasko P."/>
            <person name="Lei Y."/>
            <person name="Levitsky A.A."/>
            <person name="Li J.H."/>
            <person name="Li Z."/>
            <person name="Liang Y."/>
            <person name="Lin X."/>
            <person name="Liu X."/>
            <person name="Mattei B."/>
            <person name="McIntosh T.C."/>
            <person name="McLeod M.P."/>
            <person name="McPherson D."/>
            <person name="Merkulov G."/>
            <person name="Milshina N.V."/>
            <person name="Mobarry C."/>
            <person name="Morris J."/>
            <person name="Moshrefi A."/>
            <person name="Mount S.M."/>
            <person name="Moy M."/>
            <person name="Murphy B."/>
            <person name="Murphy L."/>
            <person name="Muzny D.M."/>
            <person name="Nelson D.L."/>
            <person name="Nelson D.R."/>
            <person name="Nelson K.A."/>
            <person name="Nixon K."/>
            <person name="Nusskern D.R."/>
            <person name="Pacleb J.M."/>
            <person name="Palazzolo M."/>
            <person name="Pittman G.S."/>
            <person name="Pan S."/>
            <person name="Pollard J."/>
            <person name="Puri V."/>
            <person name="Reese M.G."/>
            <person name="Reinert K."/>
            <person name="Remington K."/>
            <person name="Saunders R.D.C."/>
            <person name="Scheeler F."/>
            <person name="Shen H."/>
            <person name="Shue B.C."/>
            <person name="Siden-Kiamos I."/>
            <person name="Simpson M."/>
            <person name="Skupski M.P."/>
            <person name="Smith T.J."/>
            <person name="Spier E."/>
            <person name="Spradling A.C."/>
            <person name="Stapleton M."/>
            <person name="Strong R."/>
            <person name="Sun E."/>
            <person name="Svirskas R."/>
            <person name="Tector C."/>
            <person name="Turner R."/>
            <person name="Venter E."/>
            <person name="Wang A.H."/>
            <person name="Wang X."/>
            <person name="Wang Z.-Y."/>
            <person name="Wassarman D.A."/>
            <person name="Weinstock G.M."/>
            <person name="Weissenbach J."/>
            <person name="Williams S.M."/>
            <person name="Woodage T."/>
            <person name="Worley K.C."/>
            <person name="Wu D."/>
            <person name="Yang S."/>
            <person name="Yao Q.A."/>
            <person name="Ye J."/>
            <person name="Yeh R.-F."/>
            <person name="Zaveri J.S."/>
            <person name="Zhan M."/>
            <person name="Zhang G."/>
            <person name="Zhao Q."/>
            <person name="Zheng L."/>
            <person name="Zheng X.H."/>
            <person name="Zhong F.N."/>
            <person name="Zhong W."/>
            <person name="Zhou X."/>
            <person name="Zhu S.C."/>
            <person name="Zhu X."/>
            <person name="Smith H.O."/>
            <person name="Gibbs R.A."/>
            <person name="Myers E.W."/>
            <person name="Rubin G.M."/>
            <person name="Venter J.C."/>
        </authorList>
    </citation>
    <scope>NUCLEOTIDE SEQUENCE [LARGE SCALE GENOMIC DNA]</scope>
    <source>
        <strain>Berkeley</strain>
    </source>
</reference>
<reference key="3">
    <citation type="journal article" date="2002" name="Genome Biol.">
        <title>Annotation of the Drosophila melanogaster euchromatic genome: a systematic review.</title>
        <authorList>
            <person name="Misra S."/>
            <person name="Crosby M.A."/>
            <person name="Mungall C.J."/>
            <person name="Matthews B.B."/>
            <person name="Campbell K.S."/>
            <person name="Hradecky P."/>
            <person name="Huang Y."/>
            <person name="Kaminker J.S."/>
            <person name="Millburn G.H."/>
            <person name="Prochnik S.E."/>
            <person name="Smith C.D."/>
            <person name="Tupy J.L."/>
            <person name="Whitfield E.J."/>
            <person name="Bayraktaroglu L."/>
            <person name="Berman B.P."/>
            <person name="Bettencourt B.R."/>
            <person name="Celniker S.E."/>
            <person name="de Grey A.D.N.J."/>
            <person name="Drysdale R.A."/>
            <person name="Harris N.L."/>
            <person name="Richter J."/>
            <person name="Russo S."/>
            <person name="Schroeder A.J."/>
            <person name="Shu S.Q."/>
            <person name="Stapleton M."/>
            <person name="Yamada C."/>
            <person name="Ashburner M."/>
            <person name="Gelbart W.M."/>
            <person name="Rubin G.M."/>
            <person name="Lewis S.E."/>
        </authorList>
    </citation>
    <scope>GENOME REANNOTATION</scope>
    <source>
        <strain>Berkeley</strain>
    </source>
</reference>
<reference key="4">
    <citation type="journal article" date="2002" name="Genome Biol.">
        <title>A Drosophila full-length cDNA resource.</title>
        <authorList>
            <person name="Stapleton M."/>
            <person name="Carlson J.W."/>
            <person name="Brokstein P."/>
            <person name="Yu C."/>
            <person name="Champe M."/>
            <person name="George R.A."/>
            <person name="Guarin H."/>
            <person name="Kronmiller B."/>
            <person name="Pacleb J.M."/>
            <person name="Park S."/>
            <person name="Wan K.H."/>
            <person name="Rubin G.M."/>
            <person name="Celniker S.E."/>
        </authorList>
    </citation>
    <scope>NUCLEOTIDE SEQUENCE [LARGE SCALE MRNA]</scope>
    <source>
        <strain>Berkeley</strain>
        <tissue>Testis</tissue>
    </source>
</reference>
<reference key="5">
    <citation type="submission" date="2005-03" db="EMBL/GenBank/DDBJ databases">
        <authorList>
            <person name="Stapleton M."/>
            <person name="Carlson J.W."/>
            <person name="Chavez C."/>
            <person name="Frise E."/>
            <person name="George R.A."/>
            <person name="Pacleb J.M."/>
            <person name="Park S."/>
            <person name="Wan K.H."/>
            <person name="Yu C."/>
            <person name="Rubin G.M."/>
            <person name="Celniker S.E."/>
        </authorList>
    </citation>
    <scope>NUCLEOTIDE SEQUENCE [LARGE SCALE MRNA]</scope>
    <source>
        <strain>Berkeley</strain>
        <tissue>Larva</tissue>
        <tissue>Pupae</tissue>
    </source>
</reference>
<reference key="6">
    <citation type="journal article" date="2001" name="J. Cell Sci.">
        <title>The Drosophila Dpit47 protein is a nuclear Hsp90 co-chaperone that interacts with DNA polymerase alpha.</title>
        <authorList>
            <person name="Crevel G."/>
            <person name="Bates H."/>
            <person name="Huikeshoven H."/>
            <person name="Cotterill S."/>
        </authorList>
    </citation>
    <scope>INTERACTION WITH DPIT47 AND HSP83</scope>
</reference>
<reference key="7">
    <citation type="journal article" date="2008" name="Nature">
        <title>NAD synthase NMNAT acts as a chaperone to protect against neurodegeneration.</title>
        <authorList>
            <person name="Zhai R.G."/>
            <person name="Zhang F."/>
            <person name="Hiesinger P.R."/>
            <person name="Cao Y."/>
            <person name="Haueter C.M."/>
            <person name="Bellen H.J."/>
        </authorList>
    </citation>
    <scope>FUNCTION</scope>
    <scope>INDUCTION BY PROTEOTOXIC STRESS</scope>
</reference>
<comment type="function">
    <text evidence="3">Stress-response chaperone protein that prevents toxic aggregation of proteins.</text>
</comment>
<comment type="subunit">
    <text evidence="2">Forms a complex with Hsp83/Hsp90 and Dpit47.</text>
</comment>
<comment type="induction">
    <text evidence="3">Heat shock induces the synthesis of seven proteins at five otherwise inactive sites in the polytene chromosomes of fruit fly larvae. Two separate sites, producing two and three copies, respectively, code for the 70 kDa protein. Expression is induced by proteotoxic stress caused by toxic protein aggregation, for example by overexpressed Atx-1/ataxin-1 (PubMed:18344983).</text>
</comment>
<comment type="miscellaneous">
    <text evidence="4">There are 5 or 6 copies of the gene encoding this protein at two separate loci, 2 copies at chromosome locus 87A7 in reverse orientation (Hsp70Aa and Hsp70Ab) at locus 87A7, and 3 or 4 copies (depending on strain) at locus 87C1. Most strains have three copies at chromosome locus 87C1; two tandemly repeated Hsp70 genes (Hsp70Bb and Hsp70Bc) and one in reverse orientation (Hsp70Ba). Some strains, including that sequenced in the Drosophila genome project have an additional copy making three tandemly repeated Hsp70 genes (Hsp70Bb, Hsp70Bbb and Hsp70Bc).</text>
</comment>
<comment type="similarity">
    <text evidence="4">Belongs to the heat shock protein 70 family.</text>
</comment>
<comment type="sequence caution" evidence="4">
    <conflict type="frameshift">
        <sequence resource="EMBL-CDS" id="AAM49826"/>
    </conflict>
</comment>
<organism>
    <name type="scientific">Drosophila melanogaster</name>
    <name type="common">Fruit fly</name>
    <dbReference type="NCBI Taxonomy" id="7227"/>
    <lineage>
        <taxon>Eukaryota</taxon>
        <taxon>Metazoa</taxon>
        <taxon>Ecdysozoa</taxon>
        <taxon>Arthropoda</taxon>
        <taxon>Hexapoda</taxon>
        <taxon>Insecta</taxon>
        <taxon>Pterygota</taxon>
        <taxon>Neoptera</taxon>
        <taxon>Endopterygota</taxon>
        <taxon>Diptera</taxon>
        <taxon>Brachycera</taxon>
        <taxon>Muscomorpha</taxon>
        <taxon>Ephydroidea</taxon>
        <taxon>Drosophilidae</taxon>
        <taxon>Drosophila</taxon>
        <taxon>Sophophora</taxon>
    </lineage>
</organism>
<feature type="chain" id="PRO_0000078329" description="Major heat shock 70 kDa protein Aa">
    <location>
        <begin position="1"/>
        <end position="642"/>
    </location>
</feature>
<feature type="region of interest" description="Disordered" evidence="1">
    <location>
        <begin position="609"/>
        <end position="642"/>
    </location>
</feature>
<feature type="compositionally biased region" description="Gly residues" evidence="1">
    <location>
        <begin position="612"/>
        <end position="634"/>
    </location>
</feature>
<feature type="sequence variant" description="In strain: 3CPA2.">
    <original>R</original>
    <variation>G</variation>
    <location>
        <position position="69"/>
    </location>
</feature>
<feature type="sequence variant" description="In strain: FrV3-1.">
    <original>Y</original>
    <variation>S</variation>
    <location>
        <position position="441"/>
    </location>
</feature>
<feature type="sequence variant" description="In strain: QD18.">
    <original>K</original>
    <variation>T</variation>
    <location>
        <position position="495"/>
    </location>
</feature>
<feature type="sequence variant" description="In strain: 122.">
    <original>L</original>
    <variation>M</variation>
    <location>
        <position position="593"/>
    </location>
</feature>
<feature type="sequence variant" description="In strain: 122.">
    <location>
        <position position="615"/>
    </location>
</feature>
<feature type="sequence variant" description="In strain: QD18.">
    <original>P</original>
    <variation>R</variation>
    <location>
        <position position="636"/>
    </location>
</feature>
<feature type="sequence conflict" description="In Ref. 4; AAM49826." evidence="4" ref="4">
    <location>
        <begin position="139"/>
        <end position="143"/>
    </location>
</feature>
<feature type="sequence conflict" description="In Ref. 4; AAM49826." evidence="4" ref="4">
    <original>A</original>
    <variation>P</variation>
    <location>
        <position position="371"/>
    </location>
</feature>
<sequence length="642" mass="70160">MPAIGIDLGTTYSCVGVYQHGKVEIIANDQGNRTTPSYVAFTDSERLIGDPAKNQVAMNPRNTVFDAKRLIGRKYDDPKIAEDMKHWPFKVVSDGGKPKIGVEYKGESKRFAPEEISSMVLTKMKETAEAYLGESITDAVITVPAYFNDSQRQATKDAGHIAGLNVLRIINEPTAAALAYGLDKNLKGERNVLIFDLGGGTFDVSILTIDEGSLFEVRSTAGDTHLGGEDFDNRLVTHLADEFKRKYKKDLRSNPRALRRLRTAAERAKRTLSSSTEATIEIDALFEGQDFYTKVSRARFEELCADLFRNTLQPVEKALNDAKMDKGQIHDIVLVGGSTRIPKVQSLLQDFFHGKNLNLSINPDEAVAYGAAVQAAILSGDQSGKIQDVLLVDVAPLSLGIETAGGVMTKLIERNCRIPCKQTKTFSTYADNQPGVSIQVYEGERAMTKDNNALGTFDLSGIPPAPRGVPQIEVTFDLDANGILNVSAKEMSTGKAKNITIKNDKGRLSQAEIDRMVNEAEKYADEDEKHRQRITSRNALESYVFNVKQAVEQAPAGKLDEADKNSVLDKCNDTIRWLDSNTTAEKEEFDHKLEELTRHCSPIMTKMHQQGAGAGAGGPGANCGQQAGGFGGYSGPTVEEVD</sequence>
<evidence type="ECO:0000256" key="1">
    <source>
        <dbReference type="SAM" id="MobiDB-lite"/>
    </source>
</evidence>
<evidence type="ECO:0000269" key="2">
    <source>
    </source>
</evidence>
<evidence type="ECO:0000269" key="3">
    <source>
    </source>
</evidence>
<evidence type="ECO:0000305" key="4"/>
<protein>
    <recommendedName>
        <fullName>Major heat shock 70 kDa protein Aa</fullName>
        <shortName>Heat shock protein 70Aa</shortName>
    </recommendedName>
    <alternativeName>
        <fullName>HSP70-87A7</fullName>
    </alternativeName>
</protein>
<proteinExistence type="evidence at protein level"/>
<dbReference type="EMBL" id="AF295933">
    <property type="protein sequence ID" value="AAG26887.1"/>
    <property type="molecule type" value="Genomic_DNA"/>
</dbReference>
<dbReference type="EMBL" id="AF295934">
    <property type="protein sequence ID" value="AAG26888.1"/>
    <property type="molecule type" value="Genomic_DNA"/>
</dbReference>
<dbReference type="EMBL" id="AF295935">
    <property type="protein sequence ID" value="AAG26889.1"/>
    <property type="molecule type" value="Genomic_DNA"/>
</dbReference>
<dbReference type="EMBL" id="AF295936">
    <property type="protein sequence ID" value="AAG26890.1"/>
    <property type="molecule type" value="Genomic_DNA"/>
</dbReference>
<dbReference type="EMBL" id="AF295937">
    <property type="protein sequence ID" value="AAG26891.1"/>
    <property type="molecule type" value="Genomic_DNA"/>
</dbReference>
<dbReference type="EMBL" id="AF295938">
    <property type="protein sequence ID" value="AAG26892.1"/>
    <property type="molecule type" value="Genomic_DNA"/>
</dbReference>
<dbReference type="EMBL" id="AF350452">
    <property type="protein sequence ID" value="AAK30209.1"/>
    <property type="molecule type" value="Genomic_DNA"/>
</dbReference>
<dbReference type="EMBL" id="AF350453">
    <property type="protein sequence ID" value="AAK30210.1"/>
    <property type="molecule type" value="Genomic_DNA"/>
</dbReference>
<dbReference type="EMBL" id="AF350454">
    <property type="protein sequence ID" value="AAK30211.1"/>
    <property type="molecule type" value="Genomic_DNA"/>
</dbReference>
<dbReference type="EMBL" id="AF350455">
    <property type="protein sequence ID" value="AAK30212.1"/>
    <property type="molecule type" value="Genomic_DNA"/>
</dbReference>
<dbReference type="EMBL" id="AF350456">
    <property type="protein sequence ID" value="AAK30213.1"/>
    <property type="molecule type" value="Genomic_DNA"/>
</dbReference>
<dbReference type="EMBL" id="AF350457">
    <property type="protein sequence ID" value="AAK30214.1"/>
    <property type="molecule type" value="Genomic_DNA"/>
</dbReference>
<dbReference type="EMBL" id="AF350458">
    <property type="protein sequence ID" value="AAK30215.1"/>
    <property type="molecule type" value="Genomic_DNA"/>
</dbReference>
<dbReference type="EMBL" id="AF350459">
    <property type="protein sequence ID" value="AAK30216.1"/>
    <property type="molecule type" value="Genomic_DNA"/>
</dbReference>
<dbReference type="EMBL" id="AE014297">
    <property type="protein sequence ID" value="AAN13535.1"/>
    <property type="molecule type" value="Genomic_DNA"/>
</dbReference>
<dbReference type="EMBL" id="AY118457">
    <property type="protein sequence ID" value="AAM49826.1"/>
    <property type="status" value="ALT_FRAME"/>
    <property type="molecule type" value="mRNA"/>
</dbReference>
<dbReference type="EMBL" id="BT021339">
    <property type="protein sequence ID" value="AAX33487.1"/>
    <property type="molecule type" value="mRNA"/>
</dbReference>
<dbReference type="RefSeq" id="NP_731651.1">
    <property type="nucleotide sequence ID" value="NM_169441.2"/>
</dbReference>
<dbReference type="SMR" id="P82910"/>
<dbReference type="BioGRID" id="69381">
    <property type="interactions" value="50"/>
</dbReference>
<dbReference type="BioGRID" id="71511">
    <property type="interactions" value="63"/>
</dbReference>
<dbReference type="DIP" id="DIP-19548N"/>
<dbReference type="FunCoup" id="P82910">
    <property type="interactions" value="363"/>
</dbReference>
<dbReference type="STRING" id="7227.FBpp0081956"/>
<dbReference type="GlyGen" id="P82910">
    <property type="glycosylation" value="1 site"/>
</dbReference>
<dbReference type="PaxDb" id="7227-FBpp0081956"/>
<dbReference type="DNASU" id="48581"/>
<dbReference type="EnsemblMetazoa" id="FBtr0082482">
    <property type="protein sequence ID" value="FBpp0081956"/>
    <property type="gene ID" value="FBgn0013276"/>
</dbReference>
<dbReference type="EnsemblMetazoa" id="FBtr0082512">
    <property type="protein sequence ID" value="FBpp0081986"/>
    <property type="gene ID" value="FBgn0013275"/>
</dbReference>
<dbReference type="GeneID" id="44920"/>
<dbReference type="GeneID" id="48581"/>
<dbReference type="KEGG" id="dme:Dmel_CG18743"/>
<dbReference type="KEGG" id="dme:Dmel_CG31366"/>
<dbReference type="AGR" id="FB:FBgn0013275"/>
<dbReference type="CTD" id="44920"/>
<dbReference type="CTD" id="48581"/>
<dbReference type="FlyBase" id="FBgn0013275">
    <property type="gene designation" value="Hsp70Aa"/>
</dbReference>
<dbReference type="VEuPathDB" id="VectorBase:FBgn0013275"/>
<dbReference type="VEuPathDB" id="VectorBase:FBgn0013276"/>
<dbReference type="eggNOG" id="KOG0101">
    <property type="taxonomic scope" value="Eukaryota"/>
</dbReference>
<dbReference type="GeneTree" id="ENSGT00940000154813"/>
<dbReference type="HOGENOM" id="CLU_005965_3_0_1"/>
<dbReference type="InParanoid" id="P82910"/>
<dbReference type="OMA" id="QADKSHW"/>
<dbReference type="OrthoDB" id="7877850at2759"/>
<dbReference type="PhylomeDB" id="P82910"/>
<dbReference type="Reactome" id="R-DME-3371497">
    <property type="pathway name" value="HSP90 chaperone cycle for steroid hormone receptors (SHR) in the presence of ligand"/>
</dbReference>
<dbReference type="PRO" id="PR:P82910"/>
<dbReference type="Proteomes" id="UP000000803">
    <property type="component" value="Chromosome 3R"/>
</dbReference>
<dbReference type="Bgee" id="FBgn0013275">
    <property type="expression patterns" value="Expressed in T neuron T4a (Drosophila) in embryonic/larval optic lobe (Drosophila) and 216 other cell types or tissues"/>
</dbReference>
<dbReference type="ExpressionAtlas" id="P82910">
    <property type="expression patterns" value="baseline and differential"/>
</dbReference>
<dbReference type="GO" id="GO:0005737">
    <property type="term" value="C:cytoplasm"/>
    <property type="evidence" value="ECO:0000318"/>
    <property type="project" value="GO_Central"/>
</dbReference>
<dbReference type="GO" id="GO:0005829">
    <property type="term" value="C:cytosol"/>
    <property type="evidence" value="ECO:0000318"/>
    <property type="project" value="GO_Central"/>
</dbReference>
<dbReference type="GO" id="GO:0005634">
    <property type="term" value="C:nucleus"/>
    <property type="evidence" value="ECO:0000318"/>
    <property type="project" value="GO_Central"/>
</dbReference>
<dbReference type="GO" id="GO:0005886">
    <property type="term" value="C:plasma membrane"/>
    <property type="evidence" value="ECO:0000318"/>
    <property type="project" value="GO_Central"/>
</dbReference>
<dbReference type="GO" id="GO:0005524">
    <property type="term" value="F:ATP binding"/>
    <property type="evidence" value="ECO:0007669"/>
    <property type="project" value="UniProtKB-KW"/>
</dbReference>
<dbReference type="GO" id="GO:0016887">
    <property type="term" value="F:ATP hydrolysis activity"/>
    <property type="evidence" value="ECO:0000318"/>
    <property type="project" value="GO_Central"/>
</dbReference>
<dbReference type="GO" id="GO:0140662">
    <property type="term" value="F:ATP-dependent protein folding chaperone"/>
    <property type="evidence" value="ECO:0007669"/>
    <property type="project" value="InterPro"/>
</dbReference>
<dbReference type="GO" id="GO:0031072">
    <property type="term" value="F:heat shock protein binding"/>
    <property type="evidence" value="ECO:0000318"/>
    <property type="project" value="GO_Central"/>
</dbReference>
<dbReference type="GO" id="GO:0044183">
    <property type="term" value="F:protein folding chaperone"/>
    <property type="evidence" value="ECO:0000318"/>
    <property type="project" value="GO_Central"/>
</dbReference>
<dbReference type="GO" id="GO:0051085">
    <property type="term" value="P:chaperone cofactor-dependent protein refolding"/>
    <property type="evidence" value="ECO:0000318"/>
    <property type="project" value="GO_Central"/>
</dbReference>
<dbReference type="GO" id="GO:0035080">
    <property type="term" value="P:heat shock-mediated polytene chromosome puffing"/>
    <property type="evidence" value="ECO:0000315"/>
    <property type="project" value="FlyBase"/>
</dbReference>
<dbReference type="GO" id="GO:0042026">
    <property type="term" value="P:protein refolding"/>
    <property type="evidence" value="ECO:0000318"/>
    <property type="project" value="GO_Central"/>
</dbReference>
<dbReference type="GO" id="GO:0009408">
    <property type="term" value="P:response to heat"/>
    <property type="evidence" value="ECO:0000315"/>
    <property type="project" value="FlyBase"/>
</dbReference>
<dbReference type="GO" id="GO:0001666">
    <property type="term" value="P:response to hypoxia"/>
    <property type="evidence" value="ECO:0000315"/>
    <property type="project" value="FlyBase"/>
</dbReference>
<dbReference type="CDD" id="cd10233">
    <property type="entry name" value="ASKHA_NBD_HSP70_HSPA1"/>
    <property type="match status" value="1"/>
</dbReference>
<dbReference type="FunFam" id="2.60.34.10:FF:000002">
    <property type="entry name" value="Heat shock 70 kDa"/>
    <property type="match status" value="1"/>
</dbReference>
<dbReference type="FunFam" id="3.90.640.10:FF:000002">
    <property type="entry name" value="Heat shock 70 kDa"/>
    <property type="match status" value="1"/>
</dbReference>
<dbReference type="FunFam" id="3.30.420.40:FF:000172">
    <property type="entry name" value="Heat shock 70 kDa protein"/>
    <property type="match status" value="1"/>
</dbReference>
<dbReference type="FunFam" id="3.30.30.30:FF:000001">
    <property type="entry name" value="heat shock 70 kDa protein-like"/>
    <property type="match status" value="1"/>
</dbReference>
<dbReference type="FunFam" id="1.20.1270.10:FF:000024">
    <property type="entry name" value="Heat shock protein 70"/>
    <property type="match status" value="1"/>
</dbReference>
<dbReference type="FunFam" id="3.30.420.40:FF:000026">
    <property type="entry name" value="Heat shock protein 70"/>
    <property type="match status" value="1"/>
</dbReference>
<dbReference type="Gene3D" id="1.20.1270.10">
    <property type="match status" value="1"/>
</dbReference>
<dbReference type="Gene3D" id="3.30.30.30">
    <property type="match status" value="1"/>
</dbReference>
<dbReference type="Gene3D" id="3.30.420.40">
    <property type="match status" value="2"/>
</dbReference>
<dbReference type="Gene3D" id="3.90.640.10">
    <property type="entry name" value="Actin, Chain A, domain 4"/>
    <property type="match status" value="1"/>
</dbReference>
<dbReference type="Gene3D" id="2.60.34.10">
    <property type="entry name" value="Substrate Binding Domain Of DNAk, Chain A, domain 1"/>
    <property type="match status" value="1"/>
</dbReference>
<dbReference type="InterPro" id="IPR043129">
    <property type="entry name" value="ATPase_NBD"/>
</dbReference>
<dbReference type="InterPro" id="IPR018181">
    <property type="entry name" value="Heat_shock_70_CS"/>
</dbReference>
<dbReference type="InterPro" id="IPR029048">
    <property type="entry name" value="HSP70_C_sf"/>
</dbReference>
<dbReference type="InterPro" id="IPR029047">
    <property type="entry name" value="HSP70_peptide-bd_sf"/>
</dbReference>
<dbReference type="InterPro" id="IPR013126">
    <property type="entry name" value="Hsp_70_fam"/>
</dbReference>
<dbReference type="NCBIfam" id="NF001413">
    <property type="entry name" value="PRK00290.1"/>
    <property type="match status" value="1"/>
</dbReference>
<dbReference type="PANTHER" id="PTHR19375">
    <property type="entry name" value="HEAT SHOCK PROTEIN 70KDA"/>
    <property type="match status" value="1"/>
</dbReference>
<dbReference type="Pfam" id="PF00012">
    <property type="entry name" value="HSP70"/>
    <property type="match status" value="1"/>
</dbReference>
<dbReference type="PRINTS" id="PR00301">
    <property type="entry name" value="HEATSHOCK70"/>
</dbReference>
<dbReference type="SUPFAM" id="SSF53067">
    <property type="entry name" value="Actin-like ATPase domain"/>
    <property type="match status" value="2"/>
</dbReference>
<dbReference type="SUPFAM" id="SSF100934">
    <property type="entry name" value="Heat shock protein 70kD (HSP70), C-terminal subdomain"/>
    <property type="match status" value="1"/>
</dbReference>
<dbReference type="SUPFAM" id="SSF100920">
    <property type="entry name" value="Heat shock protein 70kD (HSP70), peptide-binding domain"/>
    <property type="match status" value="1"/>
</dbReference>
<dbReference type="PROSITE" id="PS00297">
    <property type="entry name" value="HSP70_1"/>
    <property type="match status" value="1"/>
</dbReference>
<dbReference type="PROSITE" id="PS00329">
    <property type="entry name" value="HSP70_2"/>
    <property type="match status" value="1"/>
</dbReference>
<dbReference type="PROSITE" id="PS01036">
    <property type="entry name" value="HSP70_3"/>
    <property type="match status" value="1"/>
</dbReference>